<protein>
    <recommendedName>
        <fullName evidence="1">Ribosomal RNA large subunit methyltransferase M</fullName>
        <ecNumber evidence="1">2.1.1.186</ecNumber>
    </recommendedName>
    <alternativeName>
        <fullName evidence="1">23S rRNA (cytidine2498-2'-O)-methyltransferase</fullName>
    </alternativeName>
    <alternativeName>
        <fullName evidence="1">23S rRNA 2'-O-ribose methyltransferase RlmM</fullName>
    </alternativeName>
</protein>
<sequence>MNKVILYCRPGFEKECAAEITEKATQHNAFGFARVKENSGYVVFECYQHEDAERLVKTLPFHELIFVRQMFVSGDLLRDLPPEDRITPIVGMLTGAIERAGDLRVEVPDTNESKELMKFCRKFTVPLRAALREHKILLGHEKADRPVLHVLFIAPGCCYVGYSYSNNNSPFYMGIPRLKFPSDAPSRSTLKLEEAFHVFVPADEWDERLGSGMYAVDLGACPGGWTYQLVKRSMMVYAVDNGPMAPSLMDTGQVMHHQADGFRFEPPRNNVYWLVCDMVEKPAKVTSLMSDWLIKGWCRETIFNLKLPMKKRYEEVSQNLALLRERLSENGIHAEVHAKHLYHDREEVTVHVRRFWSAVPGRRDER</sequence>
<name>RLMM_PECAS</name>
<proteinExistence type="inferred from homology"/>
<reference key="1">
    <citation type="journal article" date="2004" name="Proc. Natl. Acad. Sci. U.S.A.">
        <title>Genome sequence of the enterobacterial phytopathogen Erwinia carotovora subsp. atroseptica and characterization of virulence factors.</title>
        <authorList>
            <person name="Bell K.S."/>
            <person name="Sebaihia M."/>
            <person name="Pritchard L."/>
            <person name="Holden M.T.G."/>
            <person name="Hyman L.J."/>
            <person name="Holeva M.C."/>
            <person name="Thomson N.R."/>
            <person name="Bentley S.D."/>
            <person name="Churcher L.J.C."/>
            <person name="Mungall K."/>
            <person name="Atkin R."/>
            <person name="Bason N."/>
            <person name="Brooks K."/>
            <person name="Chillingworth T."/>
            <person name="Clark K."/>
            <person name="Doggett J."/>
            <person name="Fraser A."/>
            <person name="Hance Z."/>
            <person name="Hauser H."/>
            <person name="Jagels K."/>
            <person name="Moule S."/>
            <person name="Norbertczak H."/>
            <person name="Ormond D."/>
            <person name="Price C."/>
            <person name="Quail M.A."/>
            <person name="Sanders M."/>
            <person name="Walker D."/>
            <person name="Whitehead S."/>
            <person name="Salmond G.P.C."/>
            <person name="Birch P.R.J."/>
            <person name="Parkhill J."/>
            <person name="Toth I.K."/>
        </authorList>
    </citation>
    <scope>NUCLEOTIDE SEQUENCE [LARGE SCALE GENOMIC DNA]</scope>
    <source>
        <strain>SCRI 1043 / ATCC BAA-672</strain>
    </source>
</reference>
<dbReference type="EC" id="2.1.1.186" evidence="1"/>
<dbReference type="EMBL" id="BX950851">
    <property type="protein sequence ID" value="CAG73928.1"/>
    <property type="molecule type" value="Genomic_DNA"/>
</dbReference>
<dbReference type="RefSeq" id="WP_011092616.1">
    <property type="nucleotide sequence ID" value="NC_004547.2"/>
</dbReference>
<dbReference type="SMR" id="Q6D8F7"/>
<dbReference type="STRING" id="218491.ECA1017"/>
<dbReference type="GeneID" id="57207846"/>
<dbReference type="KEGG" id="eca:ECA1017"/>
<dbReference type="PATRIC" id="fig|218491.5.peg.1025"/>
<dbReference type="eggNOG" id="COG2933">
    <property type="taxonomic scope" value="Bacteria"/>
</dbReference>
<dbReference type="HOGENOM" id="CLU_043780_0_0_6"/>
<dbReference type="OrthoDB" id="154490at2"/>
<dbReference type="Proteomes" id="UP000007966">
    <property type="component" value="Chromosome"/>
</dbReference>
<dbReference type="GO" id="GO:0005737">
    <property type="term" value="C:cytoplasm"/>
    <property type="evidence" value="ECO:0007669"/>
    <property type="project" value="UniProtKB-SubCell"/>
</dbReference>
<dbReference type="GO" id="GO:0008757">
    <property type="term" value="F:S-adenosylmethionine-dependent methyltransferase activity"/>
    <property type="evidence" value="ECO:0007669"/>
    <property type="project" value="UniProtKB-UniRule"/>
</dbReference>
<dbReference type="GO" id="GO:0032259">
    <property type="term" value="P:methylation"/>
    <property type="evidence" value="ECO:0007669"/>
    <property type="project" value="UniProtKB-KW"/>
</dbReference>
<dbReference type="GO" id="GO:0006364">
    <property type="term" value="P:rRNA processing"/>
    <property type="evidence" value="ECO:0007669"/>
    <property type="project" value="UniProtKB-UniRule"/>
</dbReference>
<dbReference type="Gene3D" id="3.30.2300.20">
    <property type="match status" value="1"/>
</dbReference>
<dbReference type="Gene3D" id="3.30.70.2810">
    <property type="match status" value="1"/>
</dbReference>
<dbReference type="Gene3D" id="3.40.50.150">
    <property type="entry name" value="Vaccinia Virus protein VP39"/>
    <property type="match status" value="1"/>
</dbReference>
<dbReference type="HAMAP" id="MF_01551">
    <property type="entry name" value="23SrRNA_methyltr_M"/>
    <property type="match status" value="1"/>
</dbReference>
<dbReference type="InterPro" id="IPR040739">
    <property type="entry name" value="RlmM_FDX"/>
</dbReference>
<dbReference type="InterPro" id="IPR048646">
    <property type="entry name" value="RlmM_THUMP-like"/>
</dbReference>
<dbReference type="InterPro" id="IPR002877">
    <property type="entry name" value="RNA_MeTrfase_FtsJ_dom"/>
</dbReference>
<dbReference type="InterPro" id="IPR011224">
    <property type="entry name" value="rRNA_MeTrfase_M"/>
</dbReference>
<dbReference type="InterPro" id="IPR029063">
    <property type="entry name" value="SAM-dependent_MTases_sf"/>
</dbReference>
<dbReference type="NCBIfam" id="NF008734">
    <property type="entry name" value="PRK11760.1"/>
    <property type="match status" value="1"/>
</dbReference>
<dbReference type="PANTHER" id="PTHR37524">
    <property type="entry name" value="RIBOSOMAL RNA LARGE SUBUNIT METHYLTRANSFERASE M"/>
    <property type="match status" value="1"/>
</dbReference>
<dbReference type="PANTHER" id="PTHR37524:SF2">
    <property type="entry name" value="RIBOSOMAL RNA METHYLTRANSFERASE FTSJ DOMAIN-CONTAINING PROTEIN"/>
    <property type="match status" value="1"/>
</dbReference>
<dbReference type="Pfam" id="PF01728">
    <property type="entry name" value="FtsJ"/>
    <property type="match status" value="1"/>
</dbReference>
<dbReference type="Pfam" id="PF18125">
    <property type="entry name" value="RlmM_FDX"/>
    <property type="match status" value="1"/>
</dbReference>
<dbReference type="Pfam" id="PF21239">
    <property type="entry name" value="RLMM_N"/>
    <property type="match status" value="1"/>
</dbReference>
<dbReference type="PIRSF" id="PIRSF028774">
    <property type="entry name" value="UCP028774"/>
    <property type="match status" value="1"/>
</dbReference>
<dbReference type="SUPFAM" id="SSF53335">
    <property type="entry name" value="S-adenosyl-L-methionine-dependent methyltransferases"/>
    <property type="match status" value="1"/>
</dbReference>
<organism>
    <name type="scientific">Pectobacterium atrosepticum (strain SCRI 1043 / ATCC BAA-672)</name>
    <name type="common">Erwinia carotovora subsp. atroseptica</name>
    <dbReference type="NCBI Taxonomy" id="218491"/>
    <lineage>
        <taxon>Bacteria</taxon>
        <taxon>Pseudomonadati</taxon>
        <taxon>Pseudomonadota</taxon>
        <taxon>Gammaproteobacteria</taxon>
        <taxon>Enterobacterales</taxon>
        <taxon>Pectobacteriaceae</taxon>
        <taxon>Pectobacterium</taxon>
    </lineage>
</organism>
<evidence type="ECO:0000255" key="1">
    <source>
        <dbReference type="HAMAP-Rule" id="MF_01551"/>
    </source>
</evidence>
<feature type="chain" id="PRO_0000070401" description="Ribosomal RNA large subunit methyltransferase M">
    <location>
        <begin position="1"/>
        <end position="366"/>
    </location>
</feature>
<feature type="active site" description="Proton acceptor" evidence="1">
    <location>
        <position position="306"/>
    </location>
</feature>
<feature type="binding site" evidence="1">
    <location>
        <position position="188"/>
    </location>
    <ligand>
        <name>S-adenosyl-L-methionine</name>
        <dbReference type="ChEBI" id="CHEBI:59789"/>
    </ligand>
</feature>
<feature type="binding site" evidence="1">
    <location>
        <begin position="221"/>
        <end position="224"/>
    </location>
    <ligand>
        <name>S-adenosyl-L-methionine</name>
        <dbReference type="ChEBI" id="CHEBI:59789"/>
    </ligand>
</feature>
<feature type="binding site" evidence="1">
    <location>
        <position position="240"/>
    </location>
    <ligand>
        <name>S-adenosyl-L-methionine</name>
        <dbReference type="ChEBI" id="CHEBI:59789"/>
    </ligand>
</feature>
<feature type="binding site" evidence="1">
    <location>
        <position position="260"/>
    </location>
    <ligand>
        <name>S-adenosyl-L-methionine</name>
        <dbReference type="ChEBI" id="CHEBI:59789"/>
    </ligand>
</feature>
<feature type="binding site" evidence="1">
    <location>
        <position position="277"/>
    </location>
    <ligand>
        <name>S-adenosyl-L-methionine</name>
        <dbReference type="ChEBI" id="CHEBI:59789"/>
    </ligand>
</feature>
<accession>Q6D8F7</accession>
<gene>
    <name evidence="1" type="primary">rlmM</name>
    <name type="ordered locus">ECA1017</name>
</gene>
<comment type="function">
    <text evidence="1">Catalyzes the 2'-O-methylation at nucleotide C2498 in 23S rRNA.</text>
</comment>
<comment type="catalytic activity">
    <reaction evidence="1">
        <text>cytidine(2498) in 23S rRNA + S-adenosyl-L-methionine = 2'-O-methylcytidine(2498) in 23S rRNA + S-adenosyl-L-homocysteine + H(+)</text>
        <dbReference type="Rhea" id="RHEA:42788"/>
        <dbReference type="Rhea" id="RHEA-COMP:10244"/>
        <dbReference type="Rhea" id="RHEA-COMP:10245"/>
        <dbReference type="ChEBI" id="CHEBI:15378"/>
        <dbReference type="ChEBI" id="CHEBI:57856"/>
        <dbReference type="ChEBI" id="CHEBI:59789"/>
        <dbReference type="ChEBI" id="CHEBI:74495"/>
        <dbReference type="ChEBI" id="CHEBI:82748"/>
        <dbReference type="EC" id="2.1.1.186"/>
    </reaction>
</comment>
<comment type="subunit">
    <text evidence="1">Monomer.</text>
</comment>
<comment type="subcellular location">
    <subcellularLocation>
        <location evidence="1">Cytoplasm</location>
    </subcellularLocation>
</comment>
<comment type="similarity">
    <text evidence="1">Belongs to the class I-like SAM-binding methyltransferase superfamily. RNA methyltransferase RlmE family. RlmM subfamily.</text>
</comment>
<keyword id="KW-0963">Cytoplasm</keyword>
<keyword id="KW-0489">Methyltransferase</keyword>
<keyword id="KW-1185">Reference proteome</keyword>
<keyword id="KW-0698">rRNA processing</keyword>
<keyword id="KW-0949">S-adenosyl-L-methionine</keyword>
<keyword id="KW-0808">Transferase</keyword>